<accession>B2VBQ7</accession>
<name>TOLB_ERWT9</name>
<proteinExistence type="inferred from homology"/>
<organism>
    <name type="scientific">Erwinia tasmaniensis (strain DSM 17950 / CFBP 7177 / CIP 109463 / NCPPB 4357 / Et1/99)</name>
    <dbReference type="NCBI Taxonomy" id="465817"/>
    <lineage>
        <taxon>Bacteria</taxon>
        <taxon>Pseudomonadati</taxon>
        <taxon>Pseudomonadota</taxon>
        <taxon>Gammaproteobacteria</taxon>
        <taxon>Enterobacterales</taxon>
        <taxon>Erwiniaceae</taxon>
        <taxon>Erwinia</taxon>
    </lineage>
</organism>
<reference key="1">
    <citation type="journal article" date="2008" name="Environ. Microbiol.">
        <title>The genome of Erwinia tasmaniensis strain Et1/99, a non-pathogenic bacterium in the genus Erwinia.</title>
        <authorList>
            <person name="Kube M."/>
            <person name="Migdoll A.M."/>
            <person name="Mueller I."/>
            <person name="Kuhl H."/>
            <person name="Beck A."/>
            <person name="Reinhardt R."/>
            <person name="Geider K."/>
        </authorList>
    </citation>
    <scope>NUCLEOTIDE SEQUENCE [LARGE SCALE GENOMIC DNA]</scope>
    <source>
        <strain>DSM 17950 / CFBP 7177 / CIP 109463 / NCPPB 4357 / Et1/99</strain>
    </source>
</reference>
<keyword id="KW-0131">Cell cycle</keyword>
<keyword id="KW-0132">Cell division</keyword>
<keyword id="KW-0574">Periplasm</keyword>
<keyword id="KW-1185">Reference proteome</keyword>
<keyword id="KW-0732">Signal</keyword>
<gene>
    <name evidence="1" type="primary">tolB</name>
    <name type="ordered locus">ETA_22930</name>
</gene>
<protein>
    <recommendedName>
        <fullName evidence="1">Tol-Pal system protein TolB</fullName>
    </recommendedName>
</protein>
<evidence type="ECO:0000255" key="1">
    <source>
        <dbReference type="HAMAP-Rule" id="MF_00671"/>
    </source>
</evidence>
<sequence>MKQAFRVALSVLMLFVAVAHAEVRIEITQGVNTARPIGVVPFKWDGPGAAPEDIGGIVAADLRNSGKFNPIDRARLPQQPTSVAEVQPAAWTALGIDAVVVGQVQPGADGSYTVSYQLVDTSGNPGAVLAQNQFKVTKQWLRYAAHSASDESFEKLTAIKGAFRTRIAYVVQTNGGQFPYELRVSDYDGYNQFVVHRSPQPLMSPAWSPDGSKVAYVTFESGKSALVIQTLANGAIRQVASFPRHNGAPSFSPDGSKLAFALSKTGSLNIYVMDIGSGQISQITDGRYNSTEPTWFPDSQSLAYTSDQAGRPQIYKIGVNGGTAQRITWEGAQNQDADVSSDGKSMVMISTNSGAQHVARQDLVTGAVQKLTDTFLDETPSLAPNGTMVIYSSTQGMGSVLQLVSTDGRFKARLPATDGQVKFPAWSPYL</sequence>
<comment type="function">
    <text evidence="1">Part of the Tol-Pal system, which plays a role in outer membrane invagination during cell division and is important for maintaining outer membrane integrity. TolB occupies a key intermediary position in the Tol-Pal system because it communicates directly with both membrane-embedded components, Pal in the outer membrane and TolA in the inner membrane.</text>
</comment>
<comment type="subunit">
    <text evidence="1">The Tol-Pal system is composed of five core proteins: the inner membrane proteins TolA, TolQ and TolR, the periplasmic protein TolB and the outer membrane protein Pal. They form a network linking the inner and outer membranes and the peptidoglycan layer.</text>
</comment>
<comment type="subcellular location">
    <subcellularLocation>
        <location evidence="1">Periplasm</location>
    </subcellularLocation>
</comment>
<comment type="similarity">
    <text evidence="1">Belongs to the TolB family.</text>
</comment>
<dbReference type="EMBL" id="CU468135">
    <property type="protein sequence ID" value="CAO97339.1"/>
    <property type="molecule type" value="Genomic_DNA"/>
</dbReference>
<dbReference type="RefSeq" id="WP_012442008.1">
    <property type="nucleotide sequence ID" value="NC_010694.1"/>
</dbReference>
<dbReference type="SMR" id="B2VBQ7"/>
<dbReference type="STRING" id="465817.ETA_22930"/>
<dbReference type="KEGG" id="eta:ETA_22930"/>
<dbReference type="eggNOG" id="COG0823">
    <property type="taxonomic scope" value="Bacteria"/>
</dbReference>
<dbReference type="HOGENOM" id="CLU_047123_0_0_6"/>
<dbReference type="OrthoDB" id="9802240at2"/>
<dbReference type="Proteomes" id="UP000001726">
    <property type="component" value="Chromosome"/>
</dbReference>
<dbReference type="GO" id="GO:0042597">
    <property type="term" value="C:periplasmic space"/>
    <property type="evidence" value="ECO:0007669"/>
    <property type="project" value="UniProtKB-SubCell"/>
</dbReference>
<dbReference type="GO" id="GO:0051301">
    <property type="term" value="P:cell division"/>
    <property type="evidence" value="ECO:0007669"/>
    <property type="project" value="UniProtKB-UniRule"/>
</dbReference>
<dbReference type="GO" id="GO:0017038">
    <property type="term" value="P:protein import"/>
    <property type="evidence" value="ECO:0007669"/>
    <property type="project" value="InterPro"/>
</dbReference>
<dbReference type="FunFam" id="2.120.10.30:FF:000022">
    <property type="entry name" value="Tol-Pal system protein TolB"/>
    <property type="match status" value="1"/>
</dbReference>
<dbReference type="Gene3D" id="2.120.10.30">
    <property type="entry name" value="TolB, C-terminal domain"/>
    <property type="match status" value="1"/>
</dbReference>
<dbReference type="Gene3D" id="3.40.50.10070">
    <property type="entry name" value="TolB, N-terminal domain"/>
    <property type="match status" value="1"/>
</dbReference>
<dbReference type="HAMAP" id="MF_00671">
    <property type="entry name" value="TolB"/>
    <property type="match status" value="1"/>
</dbReference>
<dbReference type="InterPro" id="IPR011042">
    <property type="entry name" value="6-blade_b-propeller_TolB-like"/>
</dbReference>
<dbReference type="InterPro" id="IPR011659">
    <property type="entry name" value="PD40"/>
</dbReference>
<dbReference type="InterPro" id="IPR014167">
    <property type="entry name" value="Tol-Pal_TolB"/>
</dbReference>
<dbReference type="InterPro" id="IPR007195">
    <property type="entry name" value="TolB_N"/>
</dbReference>
<dbReference type="NCBIfam" id="TIGR02800">
    <property type="entry name" value="propeller_TolB"/>
    <property type="match status" value="1"/>
</dbReference>
<dbReference type="PANTHER" id="PTHR36842:SF1">
    <property type="entry name" value="PROTEIN TOLB"/>
    <property type="match status" value="1"/>
</dbReference>
<dbReference type="PANTHER" id="PTHR36842">
    <property type="entry name" value="PROTEIN TOLB HOMOLOG"/>
    <property type="match status" value="1"/>
</dbReference>
<dbReference type="Pfam" id="PF07676">
    <property type="entry name" value="PD40"/>
    <property type="match status" value="4"/>
</dbReference>
<dbReference type="Pfam" id="PF04052">
    <property type="entry name" value="TolB_N"/>
    <property type="match status" value="1"/>
</dbReference>
<dbReference type="SUPFAM" id="SSF52964">
    <property type="entry name" value="TolB, N-terminal domain"/>
    <property type="match status" value="1"/>
</dbReference>
<dbReference type="SUPFAM" id="SSF69304">
    <property type="entry name" value="Tricorn protease N-terminal domain"/>
    <property type="match status" value="1"/>
</dbReference>
<feature type="signal peptide" evidence="1">
    <location>
        <begin position="1"/>
        <end position="21"/>
    </location>
</feature>
<feature type="chain" id="PRO_1000131528" description="Tol-Pal system protein TolB" evidence="1">
    <location>
        <begin position="22"/>
        <end position="430"/>
    </location>
</feature>